<keyword id="KW-0131">Cell cycle</keyword>
<keyword id="KW-0132">Cell division</keyword>
<keyword id="KW-0997">Cell inner membrane</keyword>
<keyword id="KW-1003">Cell membrane</keyword>
<keyword id="KW-0133">Cell shape</keyword>
<keyword id="KW-0472">Membrane</keyword>
<keyword id="KW-1185">Reference proteome</keyword>
<keyword id="KW-0812">Transmembrane</keyword>
<keyword id="KW-1133">Transmembrane helix</keyword>
<feature type="chain" id="PRO_0000169477" description="Z-ring associated protein G">
    <location>
        <begin position="1"/>
        <end position="132"/>
    </location>
</feature>
<feature type="transmembrane region" description="Helical" evidence="1">
    <location>
        <begin position="1"/>
        <end position="21"/>
    </location>
</feature>
<feature type="topological domain" description="Cytoplasmic" evidence="16">
    <location>
        <begin position="22"/>
        <end position="132"/>
    </location>
</feature>
<feature type="region of interest" description="Disordered" evidence="2">
    <location>
        <begin position="95"/>
        <end position="132"/>
    </location>
</feature>
<accession>P0ADW3</accession>
<accession>P39436</accession>
<accession>Q2M8Y0</accession>
<evidence type="ECO:0000255" key="1"/>
<evidence type="ECO:0000256" key="2">
    <source>
        <dbReference type="SAM" id="MobiDB-lite"/>
    </source>
</evidence>
<evidence type="ECO:0000269" key="3">
    <source>
    </source>
</evidence>
<evidence type="ECO:0000269" key="4">
    <source>
    </source>
</evidence>
<evidence type="ECO:0000269" key="5">
    <source>
    </source>
</evidence>
<evidence type="ECO:0000269" key="6">
    <source>
    </source>
</evidence>
<evidence type="ECO:0000269" key="7">
    <source>
    </source>
</evidence>
<evidence type="ECO:0000269" key="8">
    <source>
    </source>
</evidence>
<evidence type="ECO:0000269" key="9">
    <source>
    </source>
</evidence>
<evidence type="ECO:0000269" key="10">
    <source>
    </source>
</evidence>
<evidence type="ECO:0000303" key="11">
    <source>
    </source>
</evidence>
<evidence type="ECO:0000303" key="12">
    <source>
    </source>
</evidence>
<evidence type="ECO:0000305" key="13"/>
<evidence type="ECO:0000305" key="14">
    <source>
    </source>
</evidence>
<evidence type="ECO:0000305" key="15">
    <source>
    </source>
</evidence>
<evidence type="ECO:0000305" key="16">
    <source>
    </source>
</evidence>
<proteinExistence type="evidence at protein level"/>
<sequence>MTWEYALIGLVVGIIIGAVAMRFGNRKLRQQQALQYELEKNKAELDEYREELVSHFARSAELLDTMAHDYRQLYQHMAKSSSSLLPELSAEANPFRNRLAESEASNDQAPVQMPRDYSEGASGLLRTGAKRD</sequence>
<dbReference type="EMBL" id="U18997">
    <property type="protein sequence ID" value="AAA58035.1"/>
    <property type="status" value="ALT_INIT"/>
    <property type="molecule type" value="Genomic_DNA"/>
</dbReference>
<dbReference type="EMBL" id="U00096">
    <property type="protein sequence ID" value="AAC76265.2"/>
    <property type="molecule type" value="Genomic_DNA"/>
</dbReference>
<dbReference type="EMBL" id="AP009048">
    <property type="protein sequence ID" value="BAE77276.1"/>
    <property type="molecule type" value="Genomic_DNA"/>
</dbReference>
<dbReference type="EMBL" id="U15661">
    <property type="status" value="NOT_ANNOTATED_CDS"/>
    <property type="molecule type" value="Genomic_DNA"/>
</dbReference>
<dbReference type="PIR" id="C65115">
    <property type="entry name" value="C65115"/>
</dbReference>
<dbReference type="RefSeq" id="NP_417700.2">
    <property type="nucleotide sequence ID" value="NC_000913.3"/>
</dbReference>
<dbReference type="RefSeq" id="WP_001295270.1">
    <property type="nucleotide sequence ID" value="NZ_STEB01000012.1"/>
</dbReference>
<dbReference type="SMR" id="P0ADW3"/>
<dbReference type="BioGRID" id="4261916">
    <property type="interactions" value="492"/>
</dbReference>
<dbReference type="DIP" id="DIP-39900N"/>
<dbReference type="FunCoup" id="P0ADW3">
    <property type="interactions" value="72"/>
</dbReference>
<dbReference type="IntAct" id="P0ADW3">
    <property type="interactions" value="1"/>
</dbReference>
<dbReference type="STRING" id="511145.b3233"/>
<dbReference type="jPOST" id="P0ADW3"/>
<dbReference type="PaxDb" id="511145-b3233"/>
<dbReference type="EnsemblBacteria" id="AAC76265">
    <property type="protein sequence ID" value="AAC76265"/>
    <property type="gene ID" value="b3233"/>
</dbReference>
<dbReference type="GeneID" id="93778753"/>
<dbReference type="GeneID" id="947815"/>
<dbReference type="KEGG" id="ecj:JW5539"/>
<dbReference type="KEGG" id="eco:b3233"/>
<dbReference type="KEGG" id="ecoc:C3026_17590"/>
<dbReference type="PATRIC" id="fig|511145.12.peg.3330"/>
<dbReference type="EchoBASE" id="EB2498"/>
<dbReference type="eggNOG" id="COG3105">
    <property type="taxonomic scope" value="Bacteria"/>
</dbReference>
<dbReference type="HOGENOM" id="CLU_135606_1_0_6"/>
<dbReference type="InParanoid" id="P0ADW3"/>
<dbReference type="OMA" id="HMAKTSS"/>
<dbReference type="OrthoDB" id="6401511at2"/>
<dbReference type="PhylomeDB" id="P0ADW3"/>
<dbReference type="BioCyc" id="EcoCyc:G7681-MONOMER"/>
<dbReference type="PRO" id="PR:P0ADW3"/>
<dbReference type="Proteomes" id="UP000000625">
    <property type="component" value="Chromosome"/>
</dbReference>
<dbReference type="GO" id="GO:0005886">
    <property type="term" value="C:plasma membrane"/>
    <property type="evidence" value="ECO:0000314"/>
    <property type="project" value="EcoCyc"/>
</dbReference>
<dbReference type="GO" id="GO:0051301">
    <property type="term" value="P:cell division"/>
    <property type="evidence" value="ECO:0007669"/>
    <property type="project" value="UniProtKB-KW"/>
</dbReference>
<dbReference type="GO" id="GO:0008360">
    <property type="term" value="P:regulation of cell shape"/>
    <property type="evidence" value="ECO:0007669"/>
    <property type="project" value="UniProtKB-KW"/>
</dbReference>
<dbReference type="InterPro" id="IPR009386">
    <property type="entry name" value="ZapG-like"/>
</dbReference>
<dbReference type="NCBIfam" id="NF008672">
    <property type="entry name" value="PRK11677.1"/>
    <property type="match status" value="1"/>
</dbReference>
<dbReference type="PANTHER" id="PTHR39579">
    <property type="entry name" value="INNER MEMBRANE PROTEIN YHCB"/>
    <property type="match status" value="1"/>
</dbReference>
<dbReference type="PANTHER" id="PTHR39579:SF1">
    <property type="entry name" value="INNER MEMBRANE PROTEIN YHCB"/>
    <property type="match status" value="1"/>
</dbReference>
<dbReference type="Pfam" id="PF06295">
    <property type="entry name" value="ZapG-like"/>
    <property type="match status" value="1"/>
</dbReference>
<dbReference type="PIRSF" id="PIRSF006318">
    <property type="entry name" value="YhcB"/>
    <property type="match status" value="1"/>
</dbReference>
<name>ZAPG_ECOLI</name>
<comment type="function">
    <text evidence="6 7 8 9 10">Involved in cell division, cell envelope biogenesis and cell shape maintenance (PubMed:27335665, PubMed:32323199, PubMed:33895137, PubMed:34941903). Is a key regulator of cell envelope growth, playing a crucial role in coordinating cell width, elongation and division to maintain cell envelope integrity (PubMed:34941903). Plays an important role in the lipopolysaccharide (LPS) assembly/transport (PubMed:36077106). It may regulate LpxC levels and assist MsbA-mediated LPS transport (PubMed:36077106).</text>
</comment>
<comment type="subunit">
    <text evidence="5 6 8 10">Forms homooligomers (PubMed:21210718). Interacts with proteins of the divisome, such as FtsI and FtsQ, and of the elongasome, such as RodZ and RodA (PubMed:27335665, PubMed:33895137). Also interacts several other proteins, including the shape-determining proteins MreC and MreD, the N-acetylglucosaminyl transferase MurG and the lipopolysaccharide assembly protein LapA (PubMed:27335665). It also copurifies with LapB and various proteins involved in LPS biosynthesis/transport and phospholipid biosynthesis (PubMed:36077106).</text>
</comment>
<comment type="subcellular location">
    <subcellularLocation>
        <location evidence="3 5">Cell inner membrane</location>
        <topology evidence="3 5">Single-pass membrane protein</topology>
    </subcellularLocation>
</comment>
<comment type="disruption phenotype">
    <text evidence="4 6 7 8 9 10">Deletion of the gene results in morphological aberration, such as branched shape, and cell division defects, such as filamentous growth, defects in DNA segregation and generation of chromosome-less cells (PubMed:32323199, PubMed:33895137). It also shows abnormal FtsZ ring formation and aberrant septum development (PubMed:33895137). Deletion causes high sensitivities to various envelope stresses, loss of envelope stability, increased membrane permeability and causes growth defect under normal growth conditions (PubMed:32323199, PubMed:34941903). Loss of the gene results in aberrant cell size driven by the production of excess membrane phospholipids (PubMed:34941903). The knockout mutant does not grow at 45 degrees Celsius and is hypersensitive to cell wall-acting antibiotics, even in the stationary phase (PubMed:33895137). Mutant is highly susceptible to vancomycin and various anti-folate antibiotics such as such as trimethoprim, sulfanilamide and sulfamethazine (PubMed:32323199). Loss of the gene causes a reduction in LpxC amounts and LPS defects (PubMed:36077106). The deletion of both zapG and rodZ genes causes synthetic lethality (PubMed:27335665, PubMed:34941903). Deletion is also synthetically lethal with components of peptidoglycan synthesis and recycling pathways (PubMed:34941903). No change in function or assembly of the cytochrome bd-I complex (PubMed:16863643).</text>
</comment>
<comment type="similarity">
    <text evidence="13">Belongs to the ZapG family.</text>
</comment>
<comment type="caution">
    <text evidence="14 15">Was originally thought to be a member of the cytochrome bd-I complex (PubMed:16079137). Subsequent work suggests this is not the case (PubMed:16863643).</text>
</comment>
<comment type="sequence caution" evidence="13">
    <conflict type="erroneous initiation">
        <sequence resource="EMBL-CDS" id="AAA58035"/>
    </conflict>
    <text>Extended N-terminus.</text>
</comment>
<protein>
    <recommendedName>
        <fullName evidence="11">Z-ring associated protein G</fullName>
    </recommendedName>
    <alternativeName>
        <fullName evidence="13">Cell division protein ZapG</fullName>
    </alternativeName>
    <alternativeName>
        <fullName evidence="12">LPS assembly protein LapD</fullName>
    </alternativeName>
</protein>
<reference key="1">
    <citation type="journal article" date="1997" name="Science">
        <title>The complete genome sequence of Escherichia coli K-12.</title>
        <authorList>
            <person name="Blattner F.R."/>
            <person name="Plunkett G. III"/>
            <person name="Bloch C.A."/>
            <person name="Perna N.T."/>
            <person name="Burland V."/>
            <person name="Riley M."/>
            <person name="Collado-Vides J."/>
            <person name="Glasner J.D."/>
            <person name="Rode C.K."/>
            <person name="Mayhew G.F."/>
            <person name="Gregor J."/>
            <person name="Davis N.W."/>
            <person name="Kirkpatrick H.A."/>
            <person name="Goeden M.A."/>
            <person name="Rose D.J."/>
            <person name="Mau B."/>
            <person name="Shao Y."/>
        </authorList>
    </citation>
    <scope>NUCLEOTIDE SEQUENCE [LARGE SCALE GENOMIC DNA]</scope>
    <source>
        <strain>K12 / MG1655 / ATCC 47076</strain>
    </source>
</reference>
<reference key="2">
    <citation type="journal article" date="2006" name="Mol. Syst. Biol.">
        <title>Highly accurate genome sequences of Escherichia coli K-12 strains MG1655 and W3110.</title>
        <authorList>
            <person name="Hayashi K."/>
            <person name="Morooka N."/>
            <person name="Yamamoto Y."/>
            <person name="Fujita K."/>
            <person name="Isono K."/>
            <person name="Choi S."/>
            <person name="Ohtsubo E."/>
            <person name="Baba T."/>
            <person name="Wanner B.L."/>
            <person name="Mori H."/>
            <person name="Horiuchi T."/>
        </authorList>
    </citation>
    <scope>NUCLEOTIDE SEQUENCE [LARGE SCALE GENOMIC DNA]</scope>
    <source>
        <strain>K12 / W3110 / ATCC 27325 / DSM 5911</strain>
    </source>
</reference>
<reference key="3">
    <citation type="submission" date="1994-10" db="EMBL/GenBank/DDBJ databases">
        <authorList>
            <person name="Bass S."/>
            <person name="Gu Q."/>
            <person name="Goddard A."/>
        </authorList>
    </citation>
    <scope>NUCLEOTIDE SEQUENCE [GENOMIC DNA] OF 8-132</scope>
    <source>
        <strain>K12 / W3110 / ATCC 27325 / DSM 5911</strain>
    </source>
</reference>
<reference key="4">
    <citation type="journal article" date="2005" name="J. Biol. Chem.">
        <title>Protein complexes of the Escherichia coli cell envelope.</title>
        <authorList>
            <person name="Stenberg F."/>
            <person name="Chovanec P."/>
            <person name="Maslen S.L."/>
            <person name="Robinson C.V."/>
            <person name="Ilag L."/>
            <person name="von Heijne G."/>
            <person name="Daley D.O."/>
        </authorList>
    </citation>
    <scope>IDENTIFICATION BY MASS SPECTROMETRY</scope>
    <scope>SUBCELLULAR LOCATION</scope>
    <source>
        <strain>BL21-DE3</strain>
    </source>
</reference>
<reference key="5">
    <citation type="journal article" date="2006" name="Biochim. Biophys. Acta">
        <title>Role of a putative third subunit YhcB on the assembly and function of cytochrome bd-type ubiquinol oxidase from Escherichia coli.</title>
        <authorList>
            <person name="Mogi T."/>
            <person name="Mizuochi-Asai E."/>
            <person name="Endou S."/>
            <person name="Akimoto S."/>
            <person name="Nakamura H."/>
        </authorList>
    </citation>
    <scope>DISRUPTION PHENOTYPE</scope>
</reference>
<reference key="6">
    <citation type="journal article" date="2011" name="J. Proteome Res.">
        <title>Systematic analysis of native membrane protein complexes in Escherichia coli.</title>
        <authorList>
            <person name="Maddalo G."/>
            <person name="Stenberg-Bruzell F."/>
            <person name="Gotzke H."/>
            <person name="Toddo S."/>
            <person name="Bjorkholm P."/>
            <person name="Eriksson H."/>
            <person name="Chovanec P."/>
            <person name="Genevaux P."/>
            <person name="Lehtio J."/>
            <person name="Ilag L.L."/>
            <person name="Daley D.O."/>
        </authorList>
    </citation>
    <scope>SUBUNIT</scope>
    <scope>SUBCELLULAR LOCATION</scope>
    <scope>TOPOLOGY</scope>
    <source>
        <strain>BL21-DE3</strain>
    </source>
</reference>
<reference key="7">
    <citation type="journal article" date="2012" name="ISRN Mol. Biol.">
        <title>Inner membrane protein YhcB interacts with RodZ involved in cell shape maintenance in Escherichia coli.</title>
        <authorList>
            <person name="Li G."/>
            <person name="Hamamoto K."/>
            <person name="Kitakawa M."/>
        </authorList>
    </citation>
    <scope>FUNCTION</scope>
    <scope>INTERACTION WITH CELL SHAPE PROTEINS</scope>
    <scope>DISRUPTION PHENOTYPE</scope>
    <source>
        <strain>K12</strain>
    </source>
</reference>
<reference key="8">
    <citation type="journal article" date="2020" name="J. Microbiol.">
        <title>Phenotypic characterization of a conserved inner membrane protein YhcB in Escherichia coli.</title>
        <authorList>
            <person name="Sung C.G."/>
            <person name="Choi U."/>
            <person name="Lee C.R."/>
        </authorList>
    </citation>
    <scope>FUNCTION</scope>
    <scope>DISRUPTION PHENOTYPE</scope>
</reference>
<reference key="9">
    <citation type="journal article" date="2021" name="J. Biol. Chem.">
        <title>ZapG (YhcB/DUF1043), a novel cell division protein in gamma-proteobacteria linking the Z-ring to septal peptidoglycan synthesis.</title>
        <authorList>
            <person name="Mehla J."/>
            <person name="Liechti G."/>
            <person name="Morgenstein R.M."/>
            <person name="Caufield J.H."/>
            <person name="Hosseinnia A."/>
            <person name="Gagarinova A."/>
            <person name="Phanse S."/>
            <person name="Goodacre N."/>
            <person name="Brockett M."/>
            <person name="Sakhawalkar N."/>
            <person name="Babu M."/>
            <person name="Xiao R."/>
            <person name="Montelione G.T."/>
            <person name="Vorobiev S."/>
            <person name="den Blaauwen T."/>
            <person name="Hunt J.F."/>
            <person name="Uetz P."/>
        </authorList>
    </citation>
    <scope>FUNCTION</scope>
    <scope>INTERACTION WITH DIVISOME AND ELONGASOME PROTEINS</scope>
    <scope>DISRUPTION PHENOTYPE</scope>
</reference>
<reference key="10">
    <citation type="journal article" date="2021" name="PLoS Genet.">
        <title>Loss of YhcB results in dysregulation of coordinated peptidoglycan, LPS and phospholipid synthesis during Escherichia coli cell growth.</title>
        <authorList>
            <person name="Goodall E.C.A."/>
            <person name="Isom G.L."/>
            <person name="Rooke J.L."/>
            <person name="Pullela K."/>
            <person name="Icke C."/>
            <person name="Yang Z."/>
            <person name="Boelter G."/>
            <person name="Jones A."/>
            <person name="Warner I."/>
            <person name="Da Costa R."/>
            <person name="Zhang B."/>
            <person name="Rae J."/>
            <person name="Tan W.B."/>
            <person name="Winkle M."/>
            <person name="Delhaye A."/>
            <person name="Heinz E."/>
            <person name="Collet J.F."/>
            <person name="Cunningham A.F."/>
            <person name="Blaskovich M.A."/>
            <person name="Parton R.G."/>
            <person name="Cole J.A."/>
            <person name="Banzhaf M."/>
            <person name="Chng S.S."/>
            <person name="Vollmer W."/>
            <person name="Bryant J.A."/>
            <person name="Henderson I.R."/>
        </authorList>
    </citation>
    <scope>FUNCTION</scope>
    <scope>DISRUPTION PHENOTYPE</scope>
    <source>
        <strain>K12 / BW25113</strain>
    </source>
</reference>
<reference key="11">
    <citation type="journal article" date="2022" name="Int. J. Mol. Sci.">
        <title>A new factor LapD is required for the regulation of LpxC amounts and lipopolysaccharide trafficking.</title>
        <authorList>
            <person name="Wieczorek A."/>
            <person name="Sendobra A."/>
            <person name="Maniyeri A."/>
            <person name="Sugalska M."/>
            <person name="Klein G."/>
            <person name="Raina S."/>
        </authorList>
    </citation>
    <scope>IDENTIFICATION BY MASS SPECTROMETRY</scope>
    <scope>FUNCTION</scope>
    <scope>INTERACTION WITH PROTEINS INVOLVED IN LPS/PHOSPHOLIPID BIOSYNTHESIS</scope>
    <scope>DISRUPTION PHENOTYPE</scope>
</reference>
<organism>
    <name type="scientific">Escherichia coli (strain K12)</name>
    <dbReference type="NCBI Taxonomy" id="83333"/>
    <lineage>
        <taxon>Bacteria</taxon>
        <taxon>Pseudomonadati</taxon>
        <taxon>Pseudomonadota</taxon>
        <taxon>Gammaproteobacteria</taxon>
        <taxon>Enterobacterales</taxon>
        <taxon>Enterobacteriaceae</taxon>
        <taxon>Escherichia</taxon>
    </lineage>
</organism>
<gene>
    <name evidence="11" type="primary">zapG</name>
    <name evidence="12" type="synonym">lapD</name>
    <name type="synonym">yhcB</name>
    <name type="ordered locus">b3233</name>
    <name type="ordered locus">JW5539</name>
</gene>